<dbReference type="EMBL" id="BX572594">
    <property type="protein sequence ID" value="CAE25877.1"/>
    <property type="molecule type" value="Genomic_DNA"/>
</dbReference>
<dbReference type="RefSeq" id="WP_011156001.1">
    <property type="nucleotide sequence ID" value="NZ_CP116810.1"/>
</dbReference>
<dbReference type="SMR" id="Q6NCN7"/>
<dbReference type="IntAct" id="Q6NCN7">
    <property type="interactions" value="1"/>
</dbReference>
<dbReference type="STRING" id="258594.RPA0433"/>
<dbReference type="GeneID" id="66891448"/>
<dbReference type="eggNOG" id="COG0184">
    <property type="taxonomic scope" value="Bacteria"/>
</dbReference>
<dbReference type="HOGENOM" id="CLU_148518_0_0_5"/>
<dbReference type="PhylomeDB" id="Q6NCN7"/>
<dbReference type="GO" id="GO:0022627">
    <property type="term" value="C:cytosolic small ribosomal subunit"/>
    <property type="evidence" value="ECO:0007669"/>
    <property type="project" value="TreeGrafter"/>
</dbReference>
<dbReference type="GO" id="GO:0019843">
    <property type="term" value="F:rRNA binding"/>
    <property type="evidence" value="ECO:0007669"/>
    <property type="project" value="UniProtKB-UniRule"/>
</dbReference>
<dbReference type="GO" id="GO:0003735">
    <property type="term" value="F:structural constituent of ribosome"/>
    <property type="evidence" value="ECO:0007669"/>
    <property type="project" value="InterPro"/>
</dbReference>
<dbReference type="GO" id="GO:0006412">
    <property type="term" value="P:translation"/>
    <property type="evidence" value="ECO:0007669"/>
    <property type="project" value="UniProtKB-UniRule"/>
</dbReference>
<dbReference type="CDD" id="cd00353">
    <property type="entry name" value="Ribosomal_S15p_S13e"/>
    <property type="match status" value="1"/>
</dbReference>
<dbReference type="FunFam" id="1.10.287.10:FF:000002">
    <property type="entry name" value="30S ribosomal protein S15"/>
    <property type="match status" value="1"/>
</dbReference>
<dbReference type="Gene3D" id="6.10.250.3130">
    <property type="match status" value="1"/>
</dbReference>
<dbReference type="Gene3D" id="1.10.287.10">
    <property type="entry name" value="S15/NS1, RNA-binding"/>
    <property type="match status" value="1"/>
</dbReference>
<dbReference type="HAMAP" id="MF_01343_B">
    <property type="entry name" value="Ribosomal_uS15_B"/>
    <property type="match status" value="1"/>
</dbReference>
<dbReference type="InterPro" id="IPR000589">
    <property type="entry name" value="Ribosomal_uS15"/>
</dbReference>
<dbReference type="InterPro" id="IPR005290">
    <property type="entry name" value="Ribosomal_uS15_bac-type"/>
</dbReference>
<dbReference type="InterPro" id="IPR009068">
    <property type="entry name" value="uS15_NS1_RNA-bd_sf"/>
</dbReference>
<dbReference type="NCBIfam" id="TIGR00952">
    <property type="entry name" value="S15_bact"/>
    <property type="match status" value="1"/>
</dbReference>
<dbReference type="PANTHER" id="PTHR23321">
    <property type="entry name" value="RIBOSOMAL PROTEIN S15, BACTERIAL AND ORGANELLAR"/>
    <property type="match status" value="1"/>
</dbReference>
<dbReference type="PANTHER" id="PTHR23321:SF26">
    <property type="entry name" value="SMALL RIBOSOMAL SUBUNIT PROTEIN US15M"/>
    <property type="match status" value="1"/>
</dbReference>
<dbReference type="Pfam" id="PF00312">
    <property type="entry name" value="Ribosomal_S15"/>
    <property type="match status" value="1"/>
</dbReference>
<dbReference type="SMART" id="SM01387">
    <property type="entry name" value="Ribosomal_S15"/>
    <property type="match status" value="1"/>
</dbReference>
<dbReference type="SUPFAM" id="SSF47060">
    <property type="entry name" value="S15/NS1 RNA-binding domain"/>
    <property type="match status" value="1"/>
</dbReference>
<dbReference type="PROSITE" id="PS00362">
    <property type="entry name" value="RIBOSOMAL_S15"/>
    <property type="match status" value="1"/>
</dbReference>
<name>RS15_RHOPA</name>
<proteinExistence type="evidence at protein level"/>
<organism>
    <name type="scientific">Rhodopseudomonas palustris (strain ATCC BAA-98 / CGA009)</name>
    <dbReference type="NCBI Taxonomy" id="258594"/>
    <lineage>
        <taxon>Bacteria</taxon>
        <taxon>Pseudomonadati</taxon>
        <taxon>Pseudomonadota</taxon>
        <taxon>Alphaproteobacteria</taxon>
        <taxon>Hyphomicrobiales</taxon>
        <taxon>Nitrobacteraceae</taxon>
        <taxon>Rhodopseudomonas</taxon>
    </lineage>
</organism>
<comment type="function">
    <text evidence="1">One of the primary rRNA binding proteins, it binds directly to 16S rRNA where it helps nucleate assembly of the platform of the 30S subunit by binding and bridging several RNA helices of the 16S rRNA.</text>
</comment>
<comment type="function">
    <text evidence="1">Forms an intersubunit bridge (bridge B4) with the 23S rRNA of the 50S subunit in the ribosome.</text>
</comment>
<comment type="subunit">
    <text evidence="1">Part of the 30S ribosomal subunit. Forms a bridge to the 50S subunit in the 70S ribosome, contacting the 23S rRNA.</text>
</comment>
<comment type="mass spectrometry" mass="10010.6" method="Electrospray" evidence="3"/>
<comment type="similarity">
    <text evidence="1">Belongs to the universal ribosomal protein uS15 family.</text>
</comment>
<sequence length="89" mass="10143">MSITAERKAEVIKTSATKAGDTGSPEVQVAILSERITNLTAHFKTHTKDNHSRRGLLKLVSTRRSLLDYIKKKDEARYKALLEKHNIRR</sequence>
<evidence type="ECO:0000255" key="1">
    <source>
        <dbReference type="HAMAP-Rule" id="MF_01343"/>
    </source>
</evidence>
<evidence type="ECO:0000256" key="2">
    <source>
        <dbReference type="SAM" id="MobiDB-lite"/>
    </source>
</evidence>
<evidence type="ECO:0000269" key="3">
    <source>
    </source>
</evidence>
<evidence type="ECO:0000305" key="4"/>
<feature type="initiator methionine" description="Removed">
    <location>
        <position position="1"/>
    </location>
</feature>
<feature type="chain" id="PRO_0000115524" description="Small ribosomal subunit protein uS15">
    <location>
        <begin position="2"/>
        <end position="89"/>
    </location>
</feature>
<feature type="region of interest" description="Disordered" evidence="2">
    <location>
        <begin position="1"/>
        <end position="24"/>
    </location>
</feature>
<feature type="compositionally biased region" description="Basic and acidic residues" evidence="2">
    <location>
        <begin position="1"/>
        <end position="11"/>
    </location>
</feature>
<protein>
    <recommendedName>
        <fullName evidence="1">Small ribosomal subunit protein uS15</fullName>
    </recommendedName>
    <alternativeName>
        <fullName evidence="4">30S ribosomal protein S15</fullName>
    </alternativeName>
    <alternativeName>
        <fullName>RRP-S15</fullName>
    </alternativeName>
</protein>
<keyword id="KW-0687">Ribonucleoprotein</keyword>
<keyword id="KW-0689">Ribosomal protein</keyword>
<keyword id="KW-0694">RNA-binding</keyword>
<keyword id="KW-0699">rRNA-binding</keyword>
<accession>Q6NCN7</accession>
<gene>
    <name evidence="1" type="primary">rpsO</name>
    <name type="ordered locus">RPA0433</name>
</gene>
<reference key="1">
    <citation type="journal article" date="2004" name="Nat. Biotechnol.">
        <title>Complete genome sequence of the metabolically versatile photosynthetic bacterium Rhodopseudomonas palustris.</title>
        <authorList>
            <person name="Larimer F.W."/>
            <person name="Chain P."/>
            <person name="Hauser L."/>
            <person name="Lamerdin J.E."/>
            <person name="Malfatti S."/>
            <person name="Do L."/>
            <person name="Land M.L."/>
            <person name="Pelletier D.A."/>
            <person name="Beatty J.T."/>
            <person name="Lang A.S."/>
            <person name="Tabita F.R."/>
            <person name="Gibson J.L."/>
            <person name="Hanson T.E."/>
            <person name="Bobst C."/>
            <person name="Torres y Torres J.L."/>
            <person name="Peres C."/>
            <person name="Harrison F.H."/>
            <person name="Gibson J."/>
            <person name="Harwood C.S."/>
        </authorList>
    </citation>
    <scope>NUCLEOTIDE SEQUENCE [LARGE SCALE GENOMIC DNA]</scope>
    <source>
        <strain>ATCC BAA-98 / CGA009</strain>
    </source>
</reference>
<reference key="2">
    <citation type="journal article" date="2004" name="J. Proteome Res.">
        <title>Characterization of the 70S ribosome from Rhodopseudomonas palustris using an integrated 'top-down' and 'bottom-up' mass spectrometric approach.</title>
        <authorList>
            <person name="Strader M.B."/>
            <person name="VerBerkmoes N.C."/>
            <person name="Tabb D.L."/>
            <person name="Connelly H.M."/>
            <person name="Barton J.W."/>
            <person name="Bruce B.D."/>
            <person name="Pelletier D.A."/>
            <person name="Davison B.H."/>
            <person name="Hettich R.L."/>
            <person name="Larimer F.W."/>
            <person name="Hurst G.B."/>
        </authorList>
    </citation>
    <scope>MASS SPECTROMETRY</scope>
    <source>
        <strain>ATCC BAA-98 / CGA009</strain>
    </source>
</reference>